<organism>
    <name type="scientific">Rhizobium johnstonii (strain DSM 114642 / LMG 32736 / 3841)</name>
    <name type="common">Rhizobium leguminosarum bv. viciae</name>
    <dbReference type="NCBI Taxonomy" id="216596"/>
    <lineage>
        <taxon>Bacteria</taxon>
        <taxon>Pseudomonadati</taxon>
        <taxon>Pseudomonadota</taxon>
        <taxon>Alphaproteobacteria</taxon>
        <taxon>Hyphomicrobiales</taxon>
        <taxon>Rhizobiaceae</taxon>
        <taxon>Rhizobium/Agrobacterium group</taxon>
        <taxon>Rhizobium</taxon>
        <taxon>Rhizobium johnstonii</taxon>
    </lineage>
</organism>
<sequence length="192" mass="21070">MQVILLERISKLGQMGETVKVRDGFARNYLLPLGKALRANAANKTRFEAERATLEARNLERKSEAQTVADVLDGKSFIVVRSAGETGQLYGSVAARDVVDILGAEGFNIGRNQVHLNTPIKSIGLHKVELQLHAEVEIHVELNVARSAEEAERQSKGEELTSVDAIYGVDEDALRPEDFFDPEADGVDEDEA</sequence>
<accession>Q1MJ13</accession>
<protein>
    <recommendedName>
        <fullName evidence="1">Large ribosomal subunit protein bL9</fullName>
    </recommendedName>
    <alternativeName>
        <fullName evidence="3">50S ribosomal protein L9</fullName>
    </alternativeName>
</protein>
<evidence type="ECO:0000255" key="1">
    <source>
        <dbReference type="HAMAP-Rule" id="MF_00503"/>
    </source>
</evidence>
<evidence type="ECO:0000256" key="2">
    <source>
        <dbReference type="SAM" id="MobiDB-lite"/>
    </source>
</evidence>
<evidence type="ECO:0000305" key="3"/>
<name>RL9_RHIJ3</name>
<keyword id="KW-0687">Ribonucleoprotein</keyword>
<keyword id="KW-0689">Ribosomal protein</keyword>
<keyword id="KW-0694">RNA-binding</keyword>
<keyword id="KW-0699">rRNA-binding</keyword>
<comment type="function">
    <text evidence="1">Binds to the 23S rRNA.</text>
</comment>
<comment type="similarity">
    <text evidence="1">Belongs to the bacterial ribosomal protein bL9 family.</text>
</comment>
<gene>
    <name evidence="1" type="primary">rplI</name>
    <name type="ordered locus">RL1552</name>
</gene>
<dbReference type="EMBL" id="AM236080">
    <property type="protein sequence ID" value="CAK07047.1"/>
    <property type="molecule type" value="Genomic_DNA"/>
</dbReference>
<dbReference type="RefSeq" id="WP_011651241.1">
    <property type="nucleotide sequence ID" value="NC_008380.1"/>
</dbReference>
<dbReference type="SMR" id="Q1MJ13"/>
<dbReference type="EnsemblBacteria" id="CAK07047">
    <property type="protein sequence ID" value="CAK07047"/>
    <property type="gene ID" value="RL1552"/>
</dbReference>
<dbReference type="GeneID" id="67484737"/>
<dbReference type="KEGG" id="rle:RL1552"/>
<dbReference type="eggNOG" id="COG0359">
    <property type="taxonomic scope" value="Bacteria"/>
</dbReference>
<dbReference type="HOGENOM" id="CLU_078938_1_0_5"/>
<dbReference type="Proteomes" id="UP000006575">
    <property type="component" value="Chromosome"/>
</dbReference>
<dbReference type="GO" id="GO:1990904">
    <property type="term" value="C:ribonucleoprotein complex"/>
    <property type="evidence" value="ECO:0007669"/>
    <property type="project" value="UniProtKB-KW"/>
</dbReference>
<dbReference type="GO" id="GO:0005840">
    <property type="term" value="C:ribosome"/>
    <property type="evidence" value="ECO:0007669"/>
    <property type="project" value="UniProtKB-KW"/>
</dbReference>
<dbReference type="GO" id="GO:0019843">
    <property type="term" value="F:rRNA binding"/>
    <property type="evidence" value="ECO:0007669"/>
    <property type="project" value="UniProtKB-UniRule"/>
</dbReference>
<dbReference type="GO" id="GO:0003735">
    <property type="term" value="F:structural constituent of ribosome"/>
    <property type="evidence" value="ECO:0007669"/>
    <property type="project" value="InterPro"/>
</dbReference>
<dbReference type="GO" id="GO:0006412">
    <property type="term" value="P:translation"/>
    <property type="evidence" value="ECO:0007669"/>
    <property type="project" value="UniProtKB-UniRule"/>
</dbReference>
<dbReference type="Gene3D" id="3.10.430.100">
    <property type="entry name" value="Ribosomal protein L9, C-terminal domain"/>
    <property type="match status" value="1"/>
</dbReference>
<dbReference type="Gene3D" id="3.40.5.10">
    <property type="entry name" value="Ribosomal protein L9, N-terminal domain"/>
    <property type="match status" value="1"/>
</dbReference>
<dbReference type="HAMAP" id="MF_00503">
    <property type="entry name" value="Ribosomal_bL9"/>
    <property type="match status" value="1"/>
</dbReference>
<dbReference type="InterPro" id="IPR000244">
    <property type="entry name" value="Ribosomal_bL9"/>
</dbReference>
<dbReference type="InterPro" id="IPR009027">
    <property type="entry name" value="Ribosomal_bL9/RNase_H1_N"/>
</dbReference>
<dbReference type="InterPro" id="IPR020594">
    <property type="entry name" value="Ribosomal_bL9_bac/chp"/>
</dbReference>
<dbReference type="InterPro" id="IPR020069">
    <property type="entry name" value="Ribosomal_bL9_C"/>
</dbReference>
<dbReference type="InterPro" id="IPR036791">
    <property type="entry name" value="Ribosomal_bL9_C_sf"/>
</dbReference>
<dbReference type="InterPro" id="IPR020070">
    <property type="entry name" value="Ribosomal_bL9_N"/>
</dbReference>
<dbReference type="InterPro" id="IPR036935">
    <property type="entry name" value="Ribosomal_bL9_N_sf"/>
</dbReference>
<dbReference type="NCBIfam" id="TIGR00158">
    <property type="entry name" value="L9"/>
    <property type="match status" value="1"/>
</dbReference>
<dbReference type="PANTHER" id="PTHR21368">
    <property type="entry name" value="50S RIBOSOMAL PROTEIN L9"/>
    <property type="match status" value="1"/>
</dbReference>
<dbReference type="Pfam" id="PF03948">
    <property type="entry name" value="Ribosomal_L9_C"/>
    <property type="match status" value="1"/>
</dbReference>
<dbReference type="Pfam" id="PF01281">
    <property type="entry name" value="Ribosomal_L9_N"/>
    <property type="match status" value="1"/>
</dbReference>
<dbReference type="SUPFAM" id="SSF55658">
    <property type="entry name" value="L9 N-domain-like"/>
    <property type="match status" value="1"/>
</dbReference>
<dbReference type="SUPFAM" id="SSF55653">
    <property type="entry name" value="Ribosomal protein L9 C-domain"/>
    <property type="match status" value="1"/>
</dbReference>
<dbReference type="PROSITE" id="PS00651">
    <property type="entry name" value="RIBOSOMAL_L9"/>
    <property type="match status" value="1"/>
</dbReference>
<proteinExistence type="inferred from homology"/>
<reference key="1">
    <citation type="journal article" date="2006" name="Genome Biol.">
        <title>The genome of Rhizobium leguminosarum has recognizable core and accessory components.</title>
        <authorList>
            <person name="Young J.P.W."/>
            <person name="Crossman L.C."/>
            <person name="Johnston A.W.B."/>
            <person name="Thomson N.R."/>
            <person name="Ghazoui Z.F."/>
            <person name="Hull K.H."/>
            <person name="Wexler M."/>
            <person name="Curson A.R.J."/>
            <person name="Todd J.D."/>
            <person name="Poole P.S."/>
            <person name="Mauchline T.H."/>
            <person name="East A.K."/>
            <person name="Quail M.A."/>
            <person name="Churcher C."/>
            <person name="Arrowsmith C."/>
            <person name="Cherevach I."/>
            <person name="Chillingworth T."/>
            <person name="Clarke K."/>
            <person name="Cronin A."/>
            <person name="Davis P."/>
            <person name="Fraser A."/>
            <person name="Hance Z."/>
            <person name="Hauser H."/>
            <person name="Jagels K."/>
            <person name="Moule S."/>
            <person name="Mungall K."/>
            <person name="Norbertczak H."/>
            <person name="Rabbinowitsch E."/>
            <person name="Sanders M."/>
            <person name="Simmonds M."/>
            <person name="Whitehead S."/>
            <person name="Parkhill J."/>
        </authorList>
    </citation>
    <scope>NUCLEOTIDE SEQUENCE [LARGE SCALE GENOMIC DNA]</scope>
    <source>
        <strain>DSM 114642 / LMG 32736 / 3841</strain>
    </source>
</reference>
<feature type="chain" id="PRO_0000258480" description="Large ribosomal subunit protein bL9">
    <location>
        <begin position="1"/>
        <end position="192"/>
    </location>
</feature>
<feature type="region of interest" description="Disordered" evidence="2">
    <location>
        <begin position="172"/>
        <end position="192"/>
    </location>
</feature>
<feature type="compositionally biased region" description="Acidic residues" evidence="2">
    <location>
        <begin position="179"/>
        <end position="192"/>
    </location>
</feature>